<keyword id="KW-0150">Chloroplast</keyword>
<keyword id="KW-0934">Plastid</keyword>
<keyword id="KW-0687">Ribonucleoprotein</keyword>
<keyword id="KW-0689">Ribosomal protein</keyword>
<keyword id="KW-0694">RNA-binding</keyword>
<keyword id="KW-0699">rRNA-binding</keyword>
<dbReference type="EMBL" id="EF506945">
    <property type="protein sequence ID" value="ABO69346.1"/>
    <property type="molecule type" value="Genomic_DNA"/>
</dbReference>
<dbReference type="RefSeq" id="YP_001382210.1">
    <property type="nucleotide sequence ID" value="NC_009681.1"/>
</dbReference>
<dbReference type="SMR" id="A6YGD3"/>
<dbReference type="GeneID" id="5383717"/>
<dbReference type="GO" id="GO:0009507">
    <property type="term" value="C:chloroplast"/>
    <property type="evidence" value="ECO:0007669"/>
    <property type="project" value="UniProtKB-SubCell"/>
</dbReference>
<dbReference type="GO" id="GO:1990904">
    <property type="term" value="C:ribonucleoprotein complex"/>
    <property type="evidence" value="ECO:0007669"/>
    <property type="project" value="UniProtKB-KW"/>
</dbReference>
<dbReference type="GO" id="GO:0005840">
    <property type="term" value="C:ribosome"/>
    <property type="evidence" value="ECO:0007669"/>
    <property type="project" value="UniProtKB-KW"/>
</dbReference>
<dbReference type="GO" id="GO:0019843">
    <property type="term" value="F:rRNA binding"/>
    <property type="evidence" value="ECO:0007669"/>
    <property type="project" value="UniProtKB-UniRule"/>
</dbReference>
<dbReference type="GO" id="GO:0003735">
    <property type="term" value="F:structural constituent of ribosome"/>
    <property type="evidence" value="ECO:0007669"/>
    <property type="project" value="InterPro"/>
</dbReference>
<dbReference type="GO" id="GO:0006412">
    <property type="term" value="P:translation"/>
    <property type="evidence" value="ECO:0007669"/>
    <property type="project" value="UniProtKB-UniRule"/>
</dbReference>
<dbReference type="FunFam" id="3.30.420.80:FF:000010">
    <property type="entry name" value="30S ribosomal protein S11"/>
    <property type="match status" value="1"/>
</dbReference>
<dbReference type="Gene3D" id="3.30.420.80">
    <property type="entry name" value="Ribosomal protein S11"/>
    <property type="match status" value="1"/>
</dbReference>
<dbReference type="HAMAP" id="MF_01310">
    <property type="entry name" value="Ribosomal_uS11"/>
    <property type="match status" value="1"/>
</dbReference>
<dbReference type="InterPro" id="IPR001971">
    <property type="entry name" value="Ribosomal_uS11"/>
</dbReference>
<dbReference type="InterPro" id="IPR019981">
    <property type="entry name" value="Ribosomal_uS11_bac-type"/>
</dbReference>
<dbReference type="InterPro" id="IPR036967">
    <property type="entry name" value="Ribosomal_uS11_sf"/>
</dbReference>
<dbReference type="NCBIfam" id="NF003698">
    <property type="entry name" value="PRK05309.1"/>
    <property type="match status" value="1"/>
</dbReference>
<dbReference type="NCBIfam" id="TIGR03632">
    <property type="entry name" value="uS11_bact"/>
    <property type="match status" value="1"/>
</dbReference>
<dbReference type="PANTHER" id="PTHR11759">
    <property type="entry name" value="40S RIBOSOMAL PROTEIN S14/30S RIBOSOMAL PROTEIN S11"/>
    <property type="match status" value="1"/>
</dbReference>
<dbReference type="Pfam" id="PF00411">
    <property type="entry name" value="Ribosomal_S11"/>
    <property type="match status" value="1"/>
</dbReference>
<dbReference type="PIRSF" id="PIRSF002131">
    <property type="entry name" value="Ribosomal_S11"/>
    <property type="match status" value="1"/>
</dbReference>
<dbReference type="SUPFAM" id="SSF53137">
    <property type="entry name" value="Translational machinery components"/>
    <property type="match status" value="1"/>
</dbReference>
<name>RR11_PLETE</name>
<reference key="1">
    <citation type="journal article" date="2007" name="BMC Genomics">
        <title>The chloroplast genome sequence of the green alga Leptosira terrestris: multiple losses of the inverted repeat and extensive genome rearrangements within the Trebouxiophyceae.</title>
        <authorList>
            <person name="de Cambiaire J.-C."/>
            <person name="Otis C."/>
            <person name="Turmel M."/>
            <person name="Lemieux C."/>
        </authorList>
    </citation>
    <scope>NUCLEOTIDE SEQUENCE [LARGE SCALE GENOMIC DNA]</scope>
    <source>
        <strain>CCAP 463/2 / UTEX 333</strain>
    </source>
</reference>
<protein>
    <recommendedName>
        <fullName evidence="1">Small ribosomal subunit protein uS11c</fullName>
    </recommendedName>
    <alternativeName>
        <fullName evidence="2">30S ribosomal protein S11, chloroplastic</fullName>
    </alternativeName>
</protein>
<geneLocation type="chloroplast"/>
<proteinExistence type="inferred from homology"/>
<comment type="subunit">
    <text evidence="1">Part of the 30S ribosomal subunit.</text>
</comment>
<comment type="subcellular location">
    <subcellularLocation>
        <location>Plastid</location>
        <location>Chloroplast</location>
    </subcellularLocation>
</comment>
<comment type="similarity">
    <text evidence="1">Belongs to the universal ribosomal protein uS11 family.</text>
</comment>
<evidence type="ECO:0000255" key="1">
    <source>
        <dbReference type="HAMAP-Rule" id="MF_01310"/>
    </source>
</evidence>
<evidence type="ECO:0000305" key="2"/>
<sequence length="129" mass="13959">MAKLTRKIPKKTKRKFSRGLVHIQVSFNNTIVTITNLKGDVLAWSSAGACGFKGARKGTPFAAQIVAETAARKSFDRGLKQAQVLVKGPGPGRDKALVGLFKAGIQISLIRDITAIPHNGCRPPKKRRL</sequence>
<gene>
    <name evidence="1" type="primary">rps11</name>
</gene>
<accession>A6YGD3</accession>
<feature type="chain" id="PRO_0000323368" description="Small ribosomal subunit protein uS11c">
    <location>
        <begin position="1"/>
        <end position="129"/>
    </location>
</feature>
<organism>
    <name type="scientific">Pleurastrum terricola</name>
    <name type="common">Filamentous green alga</name>
    <name type="synonym">Leptosira terrestris</name>
    <dbReference type="NCBI Taxonomy" id="34116"/>
    <lineage>
        <taxon>Eukaryota</taxon>
        <taxon>Viridiplantae</taxon>
        <taxon>Chlorophyta</taxon>
        <taxon>core chlorophytes</taxon>
        <taxon>Chlorophyceae</taxon>
        <taxon>CS clade</taxon>
        <taxon>Chlamydomonadales</taxon>
        <taxon>Pleurastraceae</taxon>
        <taxon>Pleurastrum</taxon>
    </lineage>
</organism>